<evidence type="ECO:0000255" key="1">
    <source>
        <dbReference type="HAMAP-Rule" id="MF_00034"/>
    </source>
</evidence>
<protein>
    <recommendedName>
        <fullName evidence="1">Crossover junction endodeoxyribonuclease RuvC</fullName>
        <ecNumber evidence="1">3.1.21.10</ecNumber>
    </recommendedName>
    <alternativeName>
        <fullName evidence="1">Holliday junction nuclease RuvC</fullName>
    </alternativeName>
    <alternativeName>
        <fullName evidence="1">Holliday junction resolvase RuvC</fullName>
    </alternativeName>
</protein>
<organism>
    <name type="scientific">Legionella pneumophila (strain Corby)</name>
    <dbReference type="NCBI Taxonomy" id="400673"/>
    <lineage>
        <taxon>Bacteria</taxon>
        <taxon>Pseudomonadati</taxon>
        <taxon>Pseudomonadota</taxon>
        <taxon>Gammaproteobacteria</taxon>
        <taxon>Legionellales</taxon>
        <taxon>Legionellaceae</taxon>
        <taxon>Legionella</taxon>
    </lineage>
</organism>
<sequence>MTIILGIDPGSRVTGYGLIKESDRKIAYIDSGCIRTSNDAELSHKLLQIYDGICELMDHYSPTEVAIEQIFMHNNPNSALKLGHARGVAMVAAASHRAKICEYSAREIKQSVVGYGAAEKDQVSHMVVELLQLNRAPQKDAADALAIAICHSHMRNGLSKLIGSRGTKRRRMRL</sequence>
<name>RUVC_LEGPC</name>
<keyword id="KW-0963">Cytoplasm</keyword>
<keyword id="KW-0227">DNA damage</keyword>
<keyword id="KW-0233">DNA recombination</keyword>
<keyword id="KW-0234">DNA repair</keyword>
<keyword id="KW-0238">DNA-binding</keyword>
<keyword id="KW-0255">Endonuclease</keyword>
<keyword id="KW-0378">Hydrolase</keyword>
<keyword id="KW-0460">Magnesium</keyword>
<keyword id="KW-0479">Metal-binding</keyword>
<keyword id="KW-0540">Nuclease</keyword>
<accession>A5IBE0</accession>
<reference key="1">
    <citation type="submission" date="2006-11" db="EMBL/GenBank/DDBJ databases">
        <title>Identification and characterization of a new conjugation/ type IVA secretion system (trb/tra) of L. pneumophila Corby localized on a mobile genomic island.</title>
        <authorList>
            <person name="Gloeckner G."/>
            <person name="Albert-Weissenberger C."/>
            <person name="Weinmann E."/>
            <person name="Jacobi S."/>
            <person name="Schunder E."/>
            <person name="Steinert M."/>
            <person name="Buchrieser C."/>
            <person name="Hacker J."/>
            <person name="Heuner K."/>
        </authorList>
    </citation>
    <scope>NUCLEOTIDE SEQUENCE [LARGE SCALE GENOMIC DNA]</scope>
    <source>
        <strain>Corby</strain>
    </source>
</reference>
<gene>
    <name evidence="1" type="primary">ruvC</name>
    <name type="ordered locus">LPC_0712</name>
</gene>
<proteinExistence type="inferred from homology"/>
<comment type="function">
    <text evidence="1">The RuvA-RuvB-RuvC complex processes Holliday junction (HJ) DNA during genetic recombination and DNA repair. Endonuclease that resolves HJ intermediates. Cleaves cruciform DNA by making single-stranded nicks across the HJ at symmetrical positions within the homologous arms, yielding a 5'-phosphate and a 3'-hydroxyl group; requires a central core of homology in the junction. The consensus cleavage sequence is 5'-(A/T)TT(C/G)-3'. Cleavage occurs on the 3'-side of the TT dinucleotide at the point of strand exchange. HJ branch migration catalyzed by RuvA-RuvB allows RuvC to scan DNA until it finds its consensus sequence, where it cleaves and resolves the cruciform DNA.</text>
</comment>
<comment type="catalytic activity">
    <reaction evidence="1">
        <text>Endonucleolytic cleavage at a junction such as a reciprocal single-stranded crossover between two homologous DNA duplexes (Holliday junction).</text>
        <dbReference type="EC" id="3.1.21.10"/>
    </reaction>
</comment>
<comment type="cofactor">
    <cofactor evidence="1">
        <name>Mg(2+)</name>
        <dbReference type="ChEBI" id="CHEBI:18420"/>
    </cofactor>
    <text evidence="1">Binds 2 Mg(2+) ion per subunit.</text>
</comment>
<comment type="subunit">
    <text evidence="1">Homodimer which binds Holliday junction (HJ) DNA. The HJ becomes 2-fold symmetrical on binding to RuvC with unstacked arms; it has a different conformation from HJ DNA in complex with RuvA. In the full resolvosome a probable DNA-RuvA(4)-RuvB(12)-RuvC(2) complex forms which resolves the HJ.</text>
</comment>
<comment type="subcellular location">
    <subcellularLocation>
        <location evidence="1">Cytoplasm</location>
    </subcellularLocation>
</comment>
<comment type="similarity">
    <text evidence="1">Belongs to the RuvC family.</text>
</comment>
<dbReference type="EC" id="3.1.21.10" evidence="1"/>
<dbReference type="EMBL" id="CP000675">
    <property type="protein sequence ID" value="ABQ54690.1"/>
    <property type="molecule type" value="Genomic_DNA"/>
</dbReference>
<dbReference type="RefSeq" id="WP_011946342.1">
    <property type="nucleotide sequence ID" value="NZ_JAPMSS010000002.1"/>
</dbReference>
<dbReference type="SMR" id="A5IBE0"/>
<dbReference type="KEGG" id="lpc:LPC_0712"/>
<dbReference type="HOGENOM" id="CLU_091257_2_1_6"/>
<dbReference type="GO" id="GO:0005737">
    <property type="term" value="C:cytoplasm"/>
    <property type="evidence" value="ECO:0007669"/>
    <property type="project" value="UniProtKB-SubCell"/>
</dbReference>
<dbReference type="GO" id="GO:0048476">
    <property type="term" value="C:Holliday junction resolvase complex"/>
    <property type="evidence" value="ECO:0007669"/>
    <property type="project" value="UniProtKB-UniRule"/>
</dbReference>
<dbReference type="GO" id="GO:0008821">
    <property type="term" value="F:crossover junction DNA endonuclease activity"/>
    <property type="evidence" value="ECO:0007669"/>
    <property type="project" value="UniProtKB-UniRule"/>
</dbReference>
<dbReference type="GO" id="GO:0003677">
    <property type="term" value="F:DNA binding"/>
    <property type="evidence" value="ECO:0007669"/>
    <property type="project" value="UniProtKB-KW"/>
</dbReference>
<dbReference type="GO" id="GO:0000287">
    <property type="term" value="F:magnesium ion binding"/>
    <property type="evidence" value="ECO:0007669"/>
    <property type="project" value="UniProtKB-UniRule"/>
</dbReference>
<dbReference type="GO" id="GO:0006310">
    <property type="term" value="P:DNA recombination"/>
    <property type="evidence" value="ECO:0007669"/>
    <property type="project" value="UniProtKB-UniRule"/>
</dbReference>
<dbReference type="GO" id="GO:0006281">
    <property type="term" value="P:DNA repair"/>
    <property type="evidence" value="ECO:0007669"/>
    <property type="project" value="UniProtKB-UniRule"/>
</dbReference>
<dbReference type="CDD" id="cd16962">
    <property type="entry name" value="RuvC"/>
    <property type="match status" value="1"/>
</dbReference>
<dbReference type="FunFam" id="3.30.420.10:FF:000002">
    <property type="entry name" value="Crossover junction endodeoxyribonuclease RuvC"/>
    <property type="match status" value="1"/>
</dbReference>
<dbReference type="Gene3D" id="3.30.420.10">
    <property type="entry name" value="Ribonuclease H-like superfamily/Ribonuclease H"/>
    <property type="match status" value="1"/>
</dbReference>
<dbReference type="HAMAP" id="MF_00034">
    <property type="entry name" value="RuvC"/>
    <property type="match status" value="1"/>
</dbReference>
<dbReference type="InterPro" id="IPR012337">
    <property type="entry name" value="RNaseH-like_sf"/>
</dbReference>
<dbReference type="InterPro" id="IPR036397">
    <property type="entry name" value="RNaseH_sf"/>
</dbReference>
<dbReference type="InterPro" id="IPR020563">
    <property type="entry name" value="X-over_junc_endoDNase_Mg_BS"/>
</dbReference>
<dbReference type="InterPro" id="IPR002176">
    <property type="entry name" value="X-over_junc_endoDNase_RuvC"/>
</dbReference>
<dbReference type="NCBIfam" id="NF000711">
    <property type="entry name" value="PRK00039.2-1"/>
    <property type="match status" value="1"/>
</dbReference>
<dbReference type="NCBIfam" id="TIGR00228">
    <property type="entry name" value="ruvC"/>
    <property type="match status" value="1"/>
</dbReference>
<dbReference type="PANTHER" id="PTHR30194">
    <property type="entry name" value="CROSSOVER JUNCTION ENDODEOXYRIBONUCLEASE RUVC"/>
    <property type="match status" value="1"/>
</dbReference>
<dbReference type="PANTHER" id="PTHR30194:SF3">
    <property type="entry name" value="CROSSOVER JUNCTION ENDODEOXYRIBONUCLEASE RUVC"/>
    <property type="match status" value="1"/>
</dbReference>
<dbReference type="Pfam" id="PF02075">
    <property type="entry name" value="RuvC"/>
    <property type="match status" value="1"/>
</dbReference>
<dbReference type="PRINTS" id="PR00696">
    <property type="entry name" value="RSOLVASERUVC"/>
</dbReference>
<dbReference type="SUPFAM" id="SSF53098">
    <property type="entry name" value="Ribonuclease H-like"/>
    <property type="match status" value="1"/>
</dbReference>
<dbReference type="PROSITE" id="PS01321">
    <property type="entry name" value="RUVC"/>
    <property type="match status" value="1"/>
</dbReference>
<feature type="chain" id="PRO_1000002772" description="Crossover junction endodeoxyribonuclease RuvC">
    <location>
        <begin position="1"/>
        <end position="174"/>
    </location>
</feature>
<feature type="active site" evidence="1">
    <location>
        <position position="8"/>
    </location>
</feature>
<feature type="active site" evidence="1">
    <location>
        <position position="68"/>
    </location>
</feature>
<feature type="active site" evidence="1">
    <location>
        <position position="140"/>
    </location>
</feature>
<feature type="binding site" evidence="1">
    <location>
        <position position="8"/>
    </location>
    <ligand>
        <name>Mg(2+)</name>
        <dbReference type="ChEBI" id="CHEBI:18420"/>
        <label>1</label>
    </ligand>
</feature>
<feature type="binding site" evidence="1">
    <location>
        <position position="68"/>
    </location>
    <ligand>
        <name>Mg(2+)</name>
        <dbReference type="ChEBI" id="CHEBI:18420"/>
        <label>2</label>
    </ligand>
</feature>
<feature type="binding site" evidence="1">
    <location>
        <position position="140"/>
    </location>
    <ligand>
        <name>Mg(2+)</name>
        <dbReference type="ChEBI" id="CHEBI:18420"/>
        <label>1</label>
    </ligand>
</feature>